<accession>A2ZI32</accession>
<feature type="chain" id="PRO_0000434328" description="Probable glycosyltransferase 3">
    <location>
        <begin position="1"/>
        <end position="463"/>
    </location>
</feature>
<feature type="topological domain" description="Cytoplasmic" evidence="5">
    <location>
        <begin position="1"/>
        <end position="24"/>
    </location>
</feature>
<feature type="transmembrane region" description="Helical; Signal-anchor for type II membrane protein" evidence="2">
    <location>
        <begin position="25"/>
        <end position="47"/>
    </location>
</feature>
<feature type="topological domain" description="Lumenal" evidence="5">
    <location>
        <begin position="48"/>
        <end position="463"/>
    </location>
</feature>
<feature type="region of interest" description="Disordered" evidence="4">
    <location>
        <begin position="1"/>
        <end position="20"/>
    </location>
</feature>
<feature type="region of interest" description="Disordered" evidence="4">
    <location>
        <begin position="82"/>
        <end position="125"/>
    </location>
</feature>
<feature type="compositionally biased region" description="Low complexity" evidence="4">
    <location>
        <begin position="9"/>
        <end position="20"/>
    </location>
</feature>
<feature type="compositionally biased region" description="Acidic residues" evidence="4">
    <location>
        <begin position="87"/>
        <end position="99"/>
    </location>
</feature>
<feature type="compositionally biased region" description="Low complexity" evidence="4">
    <location>
        <begin position="103"/>
        <end position="118"/>
    </location>
</feature>
<feature type="glycosylation site" description="N-linked (GlcNAc...) asparagine" evidence="3">
    <location>
        <position position="110"/>
    </location>
</feature>
<feature type="glycosylation site" description="N-linked (GlcNAc...) asparagine" evidence="3">
    <location>
        <position position="125"/>
    </location>
</feature>
<feature type="glycosylation site" description="N-linked (GlcNAc...) asparagine" evidence="3">
    <location>
        <position position="442"/>
    </location>
</feature>
<dbReference type="EC" id="2.4.-.-" evidence="5"/>
<dbReference type="EMBL" id="CM000137">
    <property type="protein sequence ID" value="EAY82266.1"/>
    <property type="molecule type" value="Genomic_DNA"/>
</dbReference>
<dbReference type="SMR" id="A2ZI32"/>
<dbReference type="STRING" id="39946.A2ZI32"/>
<dbReference type="GlyCosmos" id="A2ZI32">
    <property type="glycosylation" value="3 sites, No reported glycans"/>
</dbReference>
<dbReference type="EnsemblPlants" id="BGIOSGA036631-TA">
    <property type="protein sequence ID" value="BGIOSGA036631-PA"/>
    <property type="gene ID" value="BGIOSGA036631"/>
</dbReference>
<dbReference type="EnsemblPlants" id="OsIR64_12g0003570.01">
    <property type="protein sequence ID" value="OsIR64_12g0003570.01"/>
    <property type="gene ID" value="OsIR64_12g0003570"/>
</dbReference>
<dbReference type="EnsemblPlants" id="OsKYG_12g0003570.01">
    <property type="protein sequence ID" value="OsKYG_12g0003570.01"/>
    <property type="gene ID" value="OsKYG_12g0003570"/>
</dbReference>
<dbReference type="EnsemblPlants" id="OsLima_12g0003360.01">
    <property type="protein sequence ID" value="OsLima_12g0003360.01"/>
    <property type="gene ID" value="OsLima_12g0003360"/>
</dbReference>
<dbReference type="EnsemblPlants" id="OsPr106_12g0003590.01">
    <property type="protein sequence ID" value="OsPr106_12g0003590.01"/>
    <property type="gene ID" value="OsPr106_12g0003590"/>
</dbReference>
<dbReference type="EnsemblPlants" id="OsZS97_12G003560_01">
    <property type="protein sequence ID" value="OsZS97_12G003560_01"/>
    <property type="gene ID" value="OsZS97_12G003560"/>
</dbReference>
<dbReference type="Gramene" id="BGIOSGA036631-TA">
    <property type="protein sequence ID" value="BGIOSGA036631-PA"/>
    <property type="gene ID" value="BGIOSGA036631"/>
</dbReference>
<dbReference type="Gramene" id="OsIR64_12g0003570.01">
    <property type="protein sequence ID" value="OsIR64_12g0003570.01"/>
    <property type="gene ID" value="OsIR64_12g0003570"/>
</dbReference>
<dbReference type="Gramene" id="OsKYG_12g0003570.01">
    <property type="protein sequence ID" value="OsKYG_12g0003570.01"/>
    <property type="gene ID" value="OsKYG_12g0003570"/>
</dbReference>
<dbReference type="Gramene" id="OsLima_12g0003360.01">
    <property type="protein sequence ID" value="OsLima_12g0003360.01"/>
    <property type="gene ID" value="OsLima_12g0003360"/>
</dbReference>
<dbReference type="Gramene" id="OsPr106_12g0003590.01">
    <property type="protein sequence ID" value="OsPr106_12g0003590.01"/>
    <property type="gene ID" value="OsPr106_12g0003590"/>
</dbReference>
<dbReference type="Gramene" id="OsZS97_12G003560_01">
    <property type="protein sequence ID" value="OsZS97_12G003560_01"/>
    <property type="gene ID" value="OsZS97_12G003560"/>
</dbReference>
<dbReference type="HOGENOM" id="CLU_034328_1_0_1"/>
<dbReference type="OMA" id="KVTRWNA"/>
<dbReference type="Proteomes" id="UP000007015">
    <property type="component" value="Chromosome 12"/>
</dbReference>
<dbReference type="GO" id="GO:0005768">
    <property type="term" value="C:endosome"/>
    <property type="evidence" value="ECO:0007669"/>
    <property type="project" value="TreeGrafter"/>
</dbReference>
<dbReference type="GO" id="GO:0000139">
    <property type="term" value="C:Golgi membrane"/>
    <property type="evidence" value="ECO:0007669"/>
    <property type="project" value="UniProtKB-SubCell"/>
</dbReference>
<dbReference type="GO" id="GO:0005802">
    <property type="term" value="C:trans-Golgi network"/>
    <property type="evidence" value="ECO:0007669"/>
    <property type="project" value="TreeGrafter"/>
</dbReference>
<dbReference type="GO" id="GO:0016758">
    <property type="term" value="F:hexosyltransferase activity"/>
    <property type="evidence" value="ECO:0007669"/>
    <property type="project" value="TreeGrafter"/>
</dbReference>
<dbReference type="GO" id="GO:0009969">
    <property type="term" value="P:xyloglucan biosynthetic process"/>
    <property type="evidence" value="ECO:0007669"/>
    <property type="project" value="TreeGrafter"/>
</dbReference>
<dbReference type="FunFam" id="3.90.550.10:FF:000032">
    <property type="entry name" value="xyloglucan 6-xylosyltransferase 2"/>
    <property type="match status" value="1"/>
</dbReference>
<dbReference type="Gene3D" id="3.90.550.10">
    <property type="entry name" value="Spore Coat Polysaccharide Biosynthesis Protein SpsA, Chain A"/>
    <property type="match status" value="1"/>
</dbReference>
<dbReference type="InterPro" id="IPR008630">
    <property type="entry name" value="Glyco_trans_34"/>
</dbReference>
<dbReference type="InterPro" id="IPR029044">
    <property type="entry name" value="Nucleotide-diphossugar_trans"/>
</dbReference>
<dbReference type="PANTHER" id="PTHR31311:SF8">
    <property type="entry name" value="GLYCOSYLTRANSFERASE 3-RELATED"/>
    <property type="match status" value="1"/>
</dbReference>
<dbReference type="PANTHER" id="PTHR31311">
    <property type="entry name" value="XYLOGLUCAN 6-XYLOSYLTRANSFERASE 5-RELATED-RELATED"/>
    <property type="match status" value="1"/>
</dbReference>
<dbReference type="Pfam" id="PF05637">
    <property type="entry name" value="Glyco_transf_34"/>
    <property type="match status" value="1"/>
</dbReference>
<sequence>MAVTGGGRPAARQQAARGKQMQRTFNNVKITLICGFITLLVLRGTVGINLLTYGVGGGGGSDAVAAAEEARVVEDIERILREIRSDTDDDDDDEEEEPLGVDASTTTTTNSTTTTATAARRRSSNHTYTLGPKVTRWNAKRRQWLSRNPGFPSRDARGKPRILLVTGSQPAPCDDAAGDHYLLKATKNKIDYCRIHGIEIVHSMAHLDRELAGYWAKLPLLRRLMLSHPEVEWVWWMDSDALFTDMAFELPLARYDTSNLVIHGYPELLFAKRSWIALNTGSFLLRNCQWSLELLDAWAPMGPKGRVRDEAGKVLTASLTGRPAFEADDQSALIHILLTQKERWMDKVYVEDKYFLHGFWAGLVDKYEEMMERHHPGLGDERWPFVTHFVGCKPCGGYGDYPRERCLGGMERAFNFADNQVLRLYGFRHRSLASARVRRVANRTDNPLVNKEAALKMDAKIES</sequence>
<comment type="function">
    <text evidence="1">Probable glycosyltransferase that may be involved in the biosynthesis of xyloglucan.</text>
</comment>
<comment type="subcellular location">
    <subcellularLocation>
        <location evidence="5">Golgi apparatus membrane</location>
        <topology evidence="5">Single-pass type II membrane protein</topology>
    </subcellularLocation>
</comment>
<comment type="similarity">
    <text evidence="5">Belongs to the glycosyltransferase 34 family.</text>
</comment>
<proteinExistence type="inferred from homology"/>
<gene>
    <name evidence="5" type="primary">GT3</name>
    <name evidence="6" type="ORF">OsI_37474</name>
</gene>
<reference key="1">
    <citation type="journal article" date="2005" name="PLoS Biol.">
        <title>The genomes of Oryza sativa: a history of duplications.</title>
        <authorList>
            <person name="Yu J."/>
            <person name="Wang J."/>
            <person name="Lin W."/>
            <person name="Li S."/>
            <person name="Li H."/>
            <person name="Zhou J."/>
            <person name="Ni P."/>
            <person name="Dong W."/>
            <person name="Hu S."/>
            <person name="Zeng C."/>
            <person name="Zhang J."/>
            <person name="Zhang Y."/>
            <person name="Li R."/>
            <person name="Xu Z."/>
            <person name="Li S."/>
            <person name="Li X."/>
            <person name="Zheng H."/>
            <person name="Cong L."/>
            <person name="Lin L."/>
            <person name="Yin J."/>
            <person name="Geng J."/>
            <person name="Li G."/>
            <person name="Shi J."/>
            <person name="Liu J."/>
            <person name="Lv H."/>
            <person name="Li J."/>
            <person name="Wang J."/>
            <person name="Deng Y."/>
            <person name="Ran L."/>
            <person name="Shi X."/>
            <person name="Wang X."/>
            <person name="Wu Q."/>
            <person name="Li C."/>
            <person name="Ren X."/>
            <person name="Wang J."/>
            <person name="Wang X."/>
            <person name="Li D."/>
            <person name="Liu D."/>
            <person name="Zhang X."/>
            <person name="Ji Z."/>
            <person name="Zhao W."/>
            <person name="Sun Y."/>
            <person name="Zhang Z."/>
            <person name="Bao J."/>
            <person name="Han Y."/>
            <person name="Dong L."/>
            <person name="Ji J."/>
            <person name="Chen P."/>
            <person name="Wu S."/>
            <person name="Liu J."/>
            <person name="Xiao Y."/>
            <person name="Bu D."/>
            <person name="Tan J."/>
            <person name="Yang L."/>
            <person name="Ye C."/>
            <person name="Zhang J."/>
            <person name="Xu J."/>
            <person name="Zhou Y."/>
            <person name="Yu Y."/>
            <person name="Zhang B."/>
            <person name="Zhuang S."/>
            <person name="Wei H."/>
            <person name="Liu B."/>
            <person name="Lei M."/>
            <person name="Yu H."/>
            <person name="Li Y."/>
            <person name="Xu H."/>
            <person name="Wei S."/>
            <person name="He X."/>
            <person name="Fang L."/>
            <person name="Zhang Z."/>
            <person name="Zhang Y."/>
            <person name="Huang X."/>
            <person name="Su Z."/>
            <person name="Tong W."/>
            <person name="Li J."/>
            <person name="Tong Z."/>
            <person name="Li S."/>
            <person name="Ye J."/>
            <person name="Wang L."/>
            <person name="Fang L."/>
            <person name="Lei T."/>
            <person name="Chen C.-S."/>
            <person name="Chen H.-C."/>
            <person name="Xu Z."/>
            <person name="Li H."/>
            <person name="Huang H."/>
            <person name="Zhang F."/>
            <person name="Xu H."/>
            <person name="Li N."/>
            <person name="Zhao C."/>
            <person name="Li S."/>
            <person name="Dong L."/>
            <person name="Huang Y."/>
            <person name="Li L."/>
            <person name="Xi Y."/>
            <person name="Qi Q."/>
            <person name="Li W."/>
            <person name="Zhang B."/>
            <person name="Hu W."/>
            <person name="Zhang Y."/>
            <person name="Tian X."/>
            <person name="Jiao Y."/>
            <person name="Liang X."/>
            <person name="Jin J."/>
            <person name="Gao L."/>
            <person name="Zheng W."/>
            <person name="Hao B."/>
            <person name="Liu S.-M."/>
            <person name="Wang W."/>
            <person name="Yuan L."/>
            <person name="Cao M."/>
            <person name="McDermott J."/>
            <person name="Samudrala R."/>
            <person name="Wang J."/>
            <person name="Wong G.K.-S."/>
            <person name="Yang H."/>
        </authorList>
    </citation>
    <scope>NUCLEOTIDE SEQUENCE [LARGE SCALE GENOMIC DNA]</scope>
    <source>
        <strain>cv. 93-11</strain>
    </source>
</reference>
<name>GT3_ORYSI</name>
<keyword id="KW-0325">Glycoprotein</keyword>
<keyword id="KW-0328">Glycosyltransferase</keyword>
<keyword id="KW-0333">Golgi apparatus</keyword>
<keyword id="KW-0472">Membrane</keyword>
<keyword id="KW-1185">Reference proteome</keyword>
<keyword id="KW-0735">Signal-anchor</keyword>
<keyword id="KW-0808">Transferase</keyword>
<keyword id="KW-0812">Transmembrane</keyword>
<keyword id="KW-1133">Transmembrane helix</keyword>
<evidence type="ECO:0000250" key="1">
    <source>
        <dbReference type="UniProtKB" id="Q10MQ0"/>
    </source>
</evidence>
<evidence type="ECO:0000255" key="2"/>
<evidence type="ECO:0000255" key="3">
    <source>
        <dbReference type="PROSITE-ProRule" id="PRU00498"/>
    </source>
</evidence>
<evidence type="ECO:0000256" key="4">
    <source>
        <dbReference type="SAM" id="MobiDB-lite"/>
    </source>
</evidence>
<evidence type="ECO:0000305" key="5"/>
<evidence type="ECO:0000312" key="6">
    <source>
        <dbReference type="EMBL" id="EAY82266.1"/>
    </source>
</evidence>
<organism>
    <name type="scientific">Oryza sativa subsp. indica</name>
    <name type="common">Rice</name>
    <dbReference type="NCBI Taxonomy" id="39946"/>
    <lineage>
        <taxon>Eukaryota</taxon>
        <taxon>Viridiplantae</taxon>
        <taxon>Streptophyta</taxon>
        <taxon>Embryophyta</taxon>
        <taxon>Tracheophyta</taxon>
        <taxon>Spermatophyta</taxon>
        <taxon>Magnoliopsida</taxon>
        <taxon>Liliopsida</taxon>
        <taxon>Poales</taxon>
        <taxon>Poaceae</taxon>
        <taxon>BOP clade</taxon>
        <taxon>Oryzoideae</taxon>
        <taxon>Oryzeae</taxon>
        <taxon>Oryzinae</taxon>
        <taxon>Oryza</taxon>
        <taxon>Oryza sativa</taxon>
    </lineage>
</organism>
<protein>
    <recommendedName>
        <fullName evidence="5">Probable glycosyltransferase 3</fullName>
        <ecNumber evidence="5">2.4.-.-</ecNumber>
    </recommendedName>
</protein>